<name>NDUAC_PONPY</name>
<protein>
    <recommendedName>
        <fullName>NADH dehydrogenase [ubiquinone] 1 alpha subcomplex subunit 12</fullName>
    </recommendedName>
    <alternativeName>
        <fullName>Complex I-B17.2</fullName>
        <shortName>CI-B17.2</shortName>
        <shortName>CIB17.2</shortName>
    </alternativeName>
    <alternativeName>
        <fullName>NADH-ubiquinone oxidoreductase subunit B17.2</fullName>
    </alternativeName>
</protein>
<gene>
    <name type="primary">NDUFA12</name>
</gene>
<keyword id="KW-0007">Acetylation</keyword>
<keyword id="KW-0249">Electron transport</keyword>
<keyword id="KW-0472">Membrane</keyword>
<keyword id="KW-0496">Mitochondrion</keyword>
<keyword id="KW-0999">Mitochondrion inner membrane</keyword>
<keyword id="KW-0679">Respiratory chain</keyword>
<keyword id="KW-0813">Transport</keyword>
<proteinExistence type="evidence at transcript level"/>
<evidence type="ECO:0000250" key="1">
    <source>
        <dbReference type="UniProtKB" id="O97725"/>
    </source>
</evidence>
<evidence type="ECO:0000250" key="2">
    <source>
        <dbReference type="UniProtKB" id="Q9UI09"/>
    </source>
</evidence>
<evidence type="ECO:0000255" key="3"/>
<evidence type="ECO:0000305" key="4"/>
<organism>
    <name type="scientific">Pongo pygmaeus</name>
    <name type="common">Bornean orangutan</name>
    <dbReference type="NCBI Taxonomy" id="9600"/>
    <lineage>
        <taxon>Eukaryota</taxon>
        <taxon>Metazoa</taxon>
        <taxon>Chordata</taxon>
        <taxon>Craniata</taxon>
        <taxon>Vertebrata</taxon>
        <taxon>Euteleostomi</taxon>
        <taxon>Mammalia</taxon>
        <taxon>Eutheria</taxon>
        <taxon>Euarchontoglires</taxon>
        <taxon>Primates</taxon>
        <taxon>Haplorrhini</taxon>
        <taxon>Catarrhini</taxon>
        <taxon>Hominidae</taxon>
        <taxon>Pongo</taxon>
    </lineage>
</organism>
<reference key="1">
    <citation type="journal article" date="2006" name="Gene">
        <title>Adaptive selection of mitochondrial complex I subunits during primate radiation.</title>
        <authorList>
            <person name="Mishmar D."/>
            <person name="Ruiz-Pesini E."/>
            <person name="Mondragon-Palomino M."/>
            <person name="Procaccio V."/>
            <person name="Gaut B."/>
            <person name="Wallace D.C."/>
        </authorList>
    </citation>
    <scope>NUCLEOTIDE SEQUENCE [MRNA]</scope>
</reference>
<sequence length="145" mass="17105">MELVQVLKRGLQRITGHGGLRGYLRVFFRTNDAKVGTLVGEDKYGNKYYEDNKQFFGRHRWVVYTTEMNGKNTFWDVDGSMVPPEWHHWLHSITDDPPTTKPLTARKFIWTNHKFNVTGTPEQYVPYSTTRKKIQEWIPPSTPYK</sequence>
<comment type="function">
    <text evidence="2">Accessory subunit of the mitochondrial membrane respiratory chain NADH dehydrogenase (Complex I), that is believed not to be involved in catalysis. Complex I functions in the transfer of electrons from NADH to the respiratory chain. The immediate electron acceptor for the enzyme is believed to be ubiquinone.</text>
</comment>
<comment type="subunit">
    <text evidence="2">Complex I is composed of 45 different subunits.</text>
</comment>
<comment type="subcellular location">
    <subcellularLocation>
        <location evidence="2">Mitochondrion inner membrane</location>
        <topology evidence="3">Peripheral membrane protein</topology>
        <orientation evidence="2">Matrix side</orientation>
    </subcellularLocation>
</comment>
<comment type="similarity">
    <text evidence="4">Belongs to the complex I NDUFA12 subunit family.</text>
</comment>
<feature type="chain" id="PRO_0000251819" description="NADH dehydrogenase [ubiquinone] 1 alpha subcomplex subunit 12">
    <location>
        <begin position="1"/>
        <end position="145"/>
    </location>
</feature>
<feature type="modified residue" description="N-acetylmethionine" evidence="1">
    <location>
        <position position="1"/>
    </location>
</feature>
<dbReference type="EMBL" id="DQ885749">
    <property type="protein sequence ID" value="ABH12258.1"/>
    <property type="molecule type" value="mRNA"/>
</dbReference>
<dbReference type="RefSeq" id="XP_054300624.1">
    <property type="nucleotide sequence ID" value="XM_054444649.2"/>
</dbReference>
<dbReference type="SMR" id="Q0MQ85"/>
<dbReference type="GeneID" id="129010442"/>
<dbReference type="GO" id="GO:0005743">
    <property type="term" value="C:mitochondrial inner membrane"/>
    <property type="evidence" value="ECO:0007669"/>
    <property type="project" value="UniProtKB-SubCell"/>
</dbReference>
<dbReference type="GO" id="GO:0045271">
    <property type="term" value="C:respiratory chain complex I"/>
    <property type="evidence" value="ECO:0000250"/>
    <property type="project" value="UniProtKB"/>
</dbReference>
<dbReference type="GO" id="GO:0006979">
    <property type="term" value="P:response to oxidative stress"/>
    <property type="evidence" value="ECO:0007669"/>
    <property type="project" value="TreeGrafter"/>
</dbReference>
<dbReference type="InterPro" id="IPR007763">
    <property type="entry name" value="NDUFA12"/>
</dbReference>
<dbReference type="PANTHER" id="PTHR12910:SF2">
    <property type="entry name" value="NADH DEHYDROGENASE [UBIQUINONE] 1 ALPHA SUBCOMPLEX SUBUNIT 12"/>
    <property type="match status" value="1"/>
</dbReference>
<dbReference type="PANTHER" id="PTHR12910">
    <property type="entry name" value="NADH-UBIQUINONE OXIDOREDUCTASE SUBUNIT B17.2"/>
    <property type="match status" value="1"/>
</dbReference>
<dbReference type="Pfam" id="PF05071">
    <property type="entry name" value="NDUFA12"/>
    <property type="match status" value="1"/>
</dbReference>
<accession>Q0MQ85</accession>